<organism>
    <name type="scientific">Leishmania donovani</name>
    <dbReference type="NCBI Taxonomy" id="5661"/>
    <lineage>
        <taxon>Eukaryota</taxon>
        <taxon>Discoba</taxon>
        <taxon>Euglenozoa</taxon>
        <taxon>Kinetoplastea</taxon>
        <taxon>Metakinetoplastina</taxon>
        <taxon>Trypanosomatida</taxon>
        <taxon>Trypanosomatidae</taxon>
        <taxon>Leishmaniinae</taxon>
        <taxon>Leishmania</taxon>
    </lineage>
</organism>
<reference key="1">
    <citation type="journal article" date="1993" name="Mol. Biochem. Parasitol.">
        <title>Cloning and characterization of differentially expressed genes from in vitro-grown 'amastigotes' of Leishmania donovani.</title>
        <authorList>
            <person name="Nakhasi H.L."/>
            <person name="Joshi M."/>
            <person name="Dwyer D."/>
        </authorList>
    </citation>
    <scope>NUCLEOTIDE SEQUENCE [MRNA]</scope>
    <source>
        <strain>MHOM/SD/00/1S-C12D</strain>
    </source>
</reference>
<comment type="function">
    <text evidence="1">Methyltransferase required for the conversion of 2-polyprenyl-6-methoxy-1,4-benzoquinol (DDMQH2) to 2-polyprenyl-3-methyl-6-methoxy-1,4-benzoquinol (DMQH2).</text>
</comment>
<comment type="catalytic activity">
    <reaction evidence="1">
        <text>a 2-methoxy-6-(all-trans-polyprenyl)benzene-1,4-diol + S-adenosyl-L-methionine = a 5-methoxy-2-methyl-3-(all-trans-polyprenyl)benzene-1,4-diol + S-adenosyl-L-homocysteine + H(+)</text>
        <dbReference type="Rhea" id="RHEA:28286"/>
        <dbReference type="Rhea" id="RHEA-COMP:10858"/>
        <dbReference type="Rhea" id="RHEA-COMP:10859"/>
        <dbReference type="ChEBI" id="CHEBI:15378"/>
        <dbReference type="ChEBI" id="CHEBI:57856"/>
        <dbReference type="ChEBI" id="CHEBI:59789"/>
        <dbReference type="ChEBI" id="CHEBI:84166"/>
        <dbReference type="ChEBI" id="CHEBI:84167"/>
        <dbReference type="EC" id="2.1.1.201"/>
    </reaction>
</comment>
<comment type="pathway">
    <text evidence="1">Cofactor biosynthesis; ubiquinone biosynthesis.</text>
</comment>
<comment type="subunit">
    <text evidence="1">Component of a multi-subunit COQ enzyme complex.</text>
</comment>
<comment type="subcellular location">
    <subcellularLocation>
        <location evidence="1">Mitochondrion inner membrane</location>
        <topology evidence="1">Peripheral membrane protein</topology>
        <orientation evidence="1">Matrix side</orientation>
    </subcellularLocation>
</comment>
<comment type="miscellaneous">
    <text evidence="1">This protein may be expected to contain an N-terminal transit peptide but none has been predicted.</text>
</comment>
<comment type="similarity">
    <text evidence="1">Belongs to the class I-like SAM-binding methyltransferase superfamily. MenG/UbiE family.</text>
</comment>
<dbReference type="EC" id="2.1.1.201" evidence="1"/>
<dbReference type="EMBL" id="L06118">
    <property type="protein sequence ID" value="AAK14902.1"/>
    <property type="molecule type" value="mRNA"/>
</dbReference>
<dbReference type="PIR" id="B48583">
    <property type="entry name" value="B48583"/>
</dbReference>
<dbReference type="RefSeq" id="XP_003865672.1">
    <property type="nucleotide sequence ID" value="XM_003865624.1"/>
</dbReference>
<dbReference type="SMR" id="P55905"/>
<dbReference type="GeneID" id="13388558"/>
<dbReference type="KEGG" id="ldo:LDBPK_365590"/>
<dbReference type="VEuPathDB" id="TriTrypDB:LdBPK_365590.1"/>
<dbReference type="VEuPathDB" id="TriTrypDB:LdCL_360063200"/>
<dbReference type="VEuPathDB" id="TriTrypDB:LDHU3_36.7420"/>
<dbReference type="OMA" id="MNDVMSM"/>
<dbReference type="OrthoDB" id="6329284at2759"/>
<dbReference type="UniPathway" id="UPA00232"/>
<dbReference type="GO" id="GO:0031314">
    <property type="term" value="C:extrinsic component of mitochondrial inner membrane"/>
    <property type="evidence" value="ECO:0007669"/>
    <property type="project" value="UniProtKB-UniRule"/>
</dbReference>
<dbReference type="GO" id="GO:0008425">
    <property type="term" value="F:2-methoxy-6-polyprenyl-1,4-benzoquinol methyltransferase activity"/>
    <property type="evidence" value="ECO:0007669"/>
    <property type="project" value="UniProtKB-UniRule"/>
</dbReference>
<dbReference type="GO" id="GO:0032259">
    <property type="term" value="P:methylation"/>
    <property type="evidence" value="ECO:0007669"/>
    <property type="project" value="UniProtKB-KW"/>
</dbReference>
<dbReference type="CDD" id="cd02440">
    <property type="entry name" value="AdoMet_MTases"/>
    <property type="match status" value="1"/>
</dbReference>
<dbReference type="Gene3D" id="3.40.50.150">
    <property type="entry name" value="Vaccinia Virus protein VP39"/>
    <property type="match status" value="1"/>
</dbReference>
<dbReference type="HAMAP" id="MF_01813">
    <property type="entry name" value="MenG_UbiE_methyltr"/>
    <property type="match status" value="1"/>
</dbReference>
<dbReference type="InterPro" id="IPR029063">
    <property type="entry name" value="SAM-dependent_MTases_sf"/>
</dbReference>
<dbReference type="InterPro" id="IPR004033">
    <property type="entry name" value="UbiE/COQ5_MeTrFase"/>
</dbReference>
<dbReference type="InterPro" id="IPR023576">
    <property type="entry name" value="UbiE/COQ5_MeTrFase_CS"/>
</dbReference>
<dbReference type="NCBIfam" id="TIGR01934">
    <property type="entry name" value="MenG_MenH_UbiE"/>
    <property type="match status" value="1"/>
</dbReference>
<dbReference type="PANTHER" id="PTHR43591:SF24">
    <property type="entry name" value="2-METHOXY-6-POLYPRENYL-1,4-BENZOQUINOL METHYLASE, MITOCHONDRIAL"/>
    <property type="match status" value="1"/>
</dbReference>
<dbReference type="PANTHER" id="PTHR43591">
    <property type="entry name" value="METHYLTRANSFERASE"/>
    <property type="match status" value="1"/>
</dbReference>
<dbReference type="Pfam" id="PF01209">
    <property type="entry name" value="Ubie_methyltran"/>
    <property type="match status" value="1"/>
</dbReference>
<dbReference type="SUPFAM" id="SSF53335">
    <property type="entry name" value="S-adenosyl-L-methionine-dependent methyltransferases"/>
    <property type="match status" value="1"/>
</dbReference>
<dbReference type="PROSITE" id="PS51608">
    <property type="entry name" value="SAM_MT_UBIE"/>
    <property type="match status" value="1"/>
</dbReference>
<dbReference type="PROSITE" id="PS01183">
    <property type="entry name" value="UBIE_1"/>
    <property type="match status" value="1"/>
</dbReference>
<dbReference type="PROSITE" id="PS01184">
    <property type="entry name" value="UBIE_2"/>
    <property type="match status" value="1"/>
</dbReference>
<keyword id="KW-0472">Membrane</keyword>
<keyword id="KW-0489">Methyltransferase</keyword>
<keyword id="KW-0496">Mitochondrion</keyword>
<keyword id="KW-0999">Mitochondrion inner membrane</keyword>
<keyword id="KW-0949">S-adenosyl-L-methionine</keyword>
<keyword id="KW-0808">Transferase</keyword>
<keyword id="KW-0831">Ubiquinone biosynthesis</keyword>
<sequence>MLHYTRLGRNMGLGDAYVKKVFDSVATKYDMMNDVLSLGIHRIWKKHFVEDCVCPLPGSKFLDVAGGTGDIAFRITDSIRARGQSFGIVPKTLDGTKVVVCDINAMMLKEGQKRAEREGYMDIDWVCASGEELPFEDGAFDSYTVSFGIRNFSDRPKALREAFRVLKVGGALHVLEFSRVTCPLLSVPYELWSYGFMPQAGRMLADEESYRYLVDSIRAFPDQETFAQMIRDAGFGYVRYENLTGGIACIHTGVKTTPTPITPTTSSDIPAQNTSEATCEVKPEPNSA</sequence>
<protein>
    <recommendedName>
        <fullName evidence="1">2-methoxy-6-polyprenyl-1,4-benzoquinol methylase, mitochondrial</fullName>
        <ecNumber evidence="1">2.1.1.201</ecNumber>
    </recommendedName>
    <alternativeName>
        <fullName evidence="1">Ubiquinone biosynthesis methyltransferase COQ5</fullName>
    </alternativeName>
</protein>
<evidence type="ECO:0000255" key="1">
    <source>
        <dbReference type="HAMAP-Rule" id="MF_03191"/>
    </source>
</evidence>
<evidence type="ECO:0000256" key="2">
    <source>
        <dbReference type="SAM" id="MobiDB-lite"/>
    </source>
</evidence>
<feature type="chain" id="PRO_0000193363" description="2-methoxy-6-polyprenyl-1,4-benzoquinol methylase, mitochondrial">
    <location>
        <begin position="1"/>
        <end position="288"/>
    </location>
</feature>
<feature type="region of interest" description="Disordered" evidence="2">
    <location>
        <begin position="260"/>
        <end position="288"/>
    </location>
</feature>
<feature type="compositionally biased region" description="Low complexity" evidence="2">
    <location>
        <begin position="260"/>
        <end position="270"/>
    </location>
</feature>
<feature type="compositionally biased region" description="Basic and acidic residues" evidence="2">
    <location>
        <begin position="279"/>
        <end position="288"/>
    </location>
</feature>
<feature type="binding site" evidence="1">
    <location>
        <position position="68"/>
    </location>
    <ligand>
        <name>S-adenosyl-L-methionine</name>
        <dbReference type="ChEBI" id="CHEBI:59789"/>
    </ligand>
</feature>
<feature type="binding site" evidence="1">
    <location>
        <position position="102"/>
    </location>
    <ligand>
        <name>S-adenosyl-L-methionine</name>
        <dbReference type="ChEBI" id="CHEBI:59789"/>
    </ligand>
</feature>
<feature type="binding site" evidence="1">
    <location>
        <position position="146"/>
    </location>
    <ligand>
        <name>S-adenosyl-L-methionine</name>
        <dbReference type="ChEBI" id="CHEBI:59789"/>
    </ligand>
</feature>
<name>COQ5_LEIDO</name>
<proteinExistence type="evidence at transcript level"/>
<accession>P55905</accession>